<name>RL6_DICDI</name>
<sequence>MALDNKFVAKGLRLYSARSVANRTKTFVAKKNKVVAPKKVVAPVTPVEKTFGKGKRVIAAKASKFAPSIPAEIRSTAAKKVQQKVALRKSITPGTVLIILAGRFAGKRVVALKQLDSGLILITGPFKVNGVPLRRIDQRYVIATSTKIDVSSVKVAATINDAYFAAEKKSTTKSEGAFFSDEKKAEKKKIADSRVADQKSVDSAILAVLKKEKFLTVYLKTKFYLKKGEFPHQLKF</sequence>
<dbReference type="EMBL" id="AAFI02000190">
    <property type="protein sequence ID" value="EAL61209.1"/>
    <property type="molecule type" value="Genomic_DNA"/>
</dbReference>
<dbReference type="RefSeq" id="XP_629633.1">
    <property type="nucleotide sequence ID" value="XM_629631.1"/>
</dbReference>
<dbReference type="SMR" id="Q54D63"/>
<dbReference type="FunCoup" id="Q54D63">
    <property type="interactions" value="736"/>
</dbReference>
<dbReference type="STRING" id="44689.Q54D63"/>
<dbReference type="GlyGen" id="Q54D63">
    <property type="glycosylation" value="1 site"/>
</dbReference>
<dbReference type="PaxDb" id="44689-DDB0231338"/>
<dbReference type="EnsemblProtists" id="EAL61209">
    <property type="protein sequence ID" value="EAL61209"/>
    <property type="gene ID" value="DDB_G0292460"/>
</dbReference>
<dbReference type="GeneID" id="8628697"/>
<dbReference type="KEGG" id="ddi:DDB_G0292460"/>
<dbReference type="dictyBase" id="DDB_G0292460">
    <property type="gene designation" value="rpl6"/>
</dbReference>
<dbReference type="VEuPathDB" id="AmoebaDB:DDB_G0292460"/>
<dbReference type="eggNOG" id="KOG1694">
    <property type="taxonomic scope" value="Eukaryota"/>
</dbReference>
<dbReference type="HOGENOM" id="CLU_066767_0_0_1"/>
<dbReference type="InParanoid" id="Q54D63"/>
<dbReference type="OMA" id="KWYNADD"/>
<dbReference type="PhylomeDB" id="Q54D63"/>
<dbReference type="Reactome" id="R-DDI-156827">
    <property type="pathway name" value="L13a-mediated translational silencing of Ceruloplasmin expression"/>
</dbReference>
<dbReference type="Reactome" id="R-DDI-1799339">
    <property type="pathway name" value="SRP-dependent cotranslational protein targeting to membrane"/>
</dbReference>
<dbReference type="Reactome" id="R-DDI-72689">
    <property type="pathway name" value="Formation of a pool of free 40S subunits"/>
</dbReference>
<dbReference type="Reactome" id="R-DDI-72706">
    <property type="pathway name" value="GTP hydrolysis and joining of the 60S ribosomal subunit"/>
</dbReference>
<dbReference type="Reactome" id="R-DDI-975956">
    <property type="pathway name" value="Nonsense Mediated Decay (NMD) independent of the Exon Junction Complex (EJC)"/>
</dbReference>
<dbReference type="Reactome" id="R-DDI-975957">
    <property type="pathway name" value="Nonsense Mediated Decay (NMD) enhanced by the Exon Junction Complex (EJC)"/>
</dbReference>
<dbReference type="PRO" id="PR:Q54D63"/>
<dbReference type="Proteomes" id="UP000002195">
    <property type="component" value="Chromosome 6"/>
</dbReference>
<dbReference type="GO" id="GO:0022625">
    <property type="term" value="C:cytosolic large ribosomal subunit"/>
    <property type="evidence" value="ECO:0000318"/>
    <property type="project" value="GO_Central"/>
</dbReference>
<dbReference type="GO" id="GO:0031012">
    <property type="term" value="C:extracellular matrix"/>
    <property type="evidence" value="ECO:0007005"/>
    <property type="project" value="dictyBase"/>
</dbReference>
<dbReference type="GO" id="GO:0003723">
    <property type="term" value="F:RNA binding"/>
    <property type="evidence" value="ECO:0000318"/>
    <property type="project" value="GO_Central"/>
</dbReference>
<dbReference type="GO" id="GO:0003735">
    <property type="term" value="F:structural constituent of ribosome"/>
    <property type="evidence" value="ECO:0000318"/>
    <property type="project" value="GO_Central"/>
</dbReference>
<dbReference type="GO" id="GO:0002181">
    <property type="term" value="P:cytoplasmic translation"/>
    <property type="evidence" value="ECO:0000318"/>
    <property type="project" value="GO_Central"/>
</dbReference>
<dbReference type="CDD" id="cd13156">
    <property type="entry name" value="KOW_RPL6"/>
    <property type="match status" value="1"/>
</dbReference>
<dbReference type="FunFam" id="2.30.30.30:FF:000014">
    <property type="entry name" value="60S ribosomal protein L6"/>
    <property type="match status" value="1"/>
</dbReference>
<dbReference type="Gene3D" id="2.30.30.30">
    <property type="match status" value="1"/>
</dbReference>
<dbReference type="InterPro" id="IPR000915">
    <property type="entry name" value="60S_ribosomal_eL6"/>
</dbReference>
<dbReference type="InterPro" id="IPR014722">
    <property type="entry name" value="Rib_uL2_dom2"/>
</dbReference>
<dbReference type="InterPro" id="IPR049633">
    <property type="entry name" value="Ribosomal_eL6_CS"/>
</dbReference>
<dbReference type="InterPro" id="IPR041997">
    <property type="entry name" value="Ribosomal_eL6_KOW"/>
</dbReference>
<dbReference type="InterPro" id="IPR008991">
    <property type="entry name" value="Translation_prot_SH3-like_sf"/>
</dbReference>
<dbReference type="PANTHER" id="PTHR10715">
    <property type="entry name" value="60S RIBOSOMAL PROTEIN L6"/>
    <property type="match status" value="1"/>
</dbReference>
<dbReference type="PANTHER" id="PTHR10715:SF0">
    <property type="entry name" value="LARGE RIBOSOMAL SUBUNIT PROTEIN EL6"/>
    <property type="match status" value="1"/>
</dbReference>
<dbReference type="Pfam" id="PF01159">
    <property type="entry name" value="Ribosomal_L6e"/>
    <property type="match status" value="1"/>
</dbReference>
<dbReference type="SUPFAM" id="SSF50104">
    <property type="entry name" value="Translation proteins SH3-like domain"/>
    <property type="match status" value="1"/>
</dbReference>
<dbReference type="PROSITE" id="PS01170">
    <property type="entry name" value="RIBOSOMAL_L6E"/>
    <property type="match status" value="1"/>
</dbReference>
<protein>
    <recommendedName>
        <fullName evidence="1">Large ribosomal subunit protein eL6</fullName>
    </recommendedName>
    <alternativeName>
        <fullName>60S ribosomal protein L6</fullName>
    </alternativeName>
</protein>
<comment type="similarity">
    <text evidence="1">Belongs to the eukaryotic ribosomal protein eL6 family.</text>
</comment>
<gene>
    <name type="primary">rpl6</name>
    <name type="ORF">DDB_G0292460</name>
</gene>
<evidence type="ECO:0000305" key="1"/>
<reference key="1">
    <citation type="journal article" date="2005" name="Nature">
        <title>The genome of the social amoeba Dictyostelium discoideum.</title>
        <authorList>
            <person name="Eichinger L."/>
            <person name="Pachebat J.A."/>
            <person name="Gloeckner G."/>
            <person name="Rajandream M.A."/>
            <person name="Sucgang R."/>
            <person name="Berriman M."/>
            <person name="Song J."/>
            <person name="Olsen R."/>
            <person name="Szafranski K."/>
            <person name="Xu Q."/>
            <person name="Tunggal B."/>
            <person name="Kummerfeld S."/>
            <person name="Madera M."/>
            <person name="Konfortov B.A."/>
            <person name="Rivero F."/>
            <person name="Bankier A.T."/>
            <person name="Lehmann R."/>
            <person name="Hamlin N."/>
            <person name="Davies R."/>
            <person name="Gaudet P."/>
            <person name="Fey P."/>
            <person name="Pilcher K."/>
            <person name="Chen G."/>
            <person name="Saunders D."/>
            <person name="Sodergren E.J."/>
            <person name="Davis P."/>
            <person name="Kerhornou A."/>
            <person name="Nie X."/>
            <person name="Hall N."/>
            <person name="Anjard C."/>
            <person name="Hemphill L."/>
            <person name="Bason N."/>
            <person name="Farbrother P."/>
            <person name="Desany B."/>
            <person name="Just E."/>
            <person name="Morio T."/>
            <person name="Rost R."/>
            <person name="Churcher C.M."/>
            <person name="Cooper J."/>
            <person name="Haydock S."/>
            <person name="van Driessche N."/>
            <person name="Cronin A."/>
            <person name="Goodhead I."/>
            <person name="Muzny D.M."/>
            <person name="Mourier T."/>
            <person name="Pain A."/>
            <person name="Lu M."/>
            <person name="Harper D."/>
            <person name="Lindsay R."/>
            <person name="Hauser H."/>
            <person name="James K.D."/>
            <person name="Quiles M."/>
            <person name="Madan Babu M."/>
            <person name="Saito T."/>
            <person name="Buchrieser C."/>
            <person name="Wardroper A."/>
            <person name="Felder M."/>
            <person name="Thangavelu M."/>
            <person name="Johnson D."/>
            <person name="Knights A."/>
            <person name="Loulseged H."/>
            <person name="Mungall K.L."/>
            <person name="Oliver K."/>
            <person name="Price C."/>
            <person name="Quail M.A."/>
            <person name="Urushihara H."/>
            <person name="Hernandez J."/>
            <person name="Rabbinowitsch E."/>
            <person name="Steffen D."/>
            <person name="Sanders M."/>
            <person name="Ma J."/>
            <person name="Kohara Y."/>
            <person name="Sharp S."/>
            <person name="Simmonds M.N."/>
            <person name="Spiegler S."/>
            <person name="Tivey A."/>
            <person name="Sugano S."/>
            <person name="White B."/>
            <person name="Walker D."/>
            <person name="Woodward J.R."/>
            <person name="Winckler T."/>
            <person name="Tanaka Y."/>
            <person name="Shaulsky G."/>
            <person name="Schleicher M."/>
            <person name="Weinstock G.M."/>
            <person name="Rosenthal A."/>
            <person name="Cox E.C."/>
            <person name="Chisholm R.L."/>
            <person name="Gibbs R.A."/>
            <person name="Loomis W.F."/>
            <person name="Platzer M."/>
            <person name="Kay R.R."/>
            <person name="Williams J.G."/>
            <person name="Dear P.H."/>
            <person name="Noegel A.A."/>
            <person name="Barrell B.G."/>
            <person name="Kuspa A."/>
        </authorList>
    </citation>
    <scope>NUCLEOTIDE SEQUENCE [LARGE SCALE GENOMIC DNA]</scope>
    <source>
        <strain>AX4</strain>
    </source>
</reference>
<reference key="2">
    <citation type="submission" date="2009-07" db="UniProtKB">
        <authorList>
            <person name="Bienvenut W.V."/>
            <person name="Ura S."/>
            <person name="Insall R.H."/>
        </authorList>
    </citation>
    <scope>PROTEIN SEQUENCE OF 39-53; 62-79; 90-103; 155-169; 200-211 AND 214-220</scope>
    <scope>IDENTIFICATION BY MASS SPECTROMETRY</scope>
    <source>
        <strain>AX2</strain>
    </source>
</reference>
<organism>
    <name type="scientific">Dictyostelium discoideum</name>
    <name type="common">Social amoeba</name>
    <dbReference type="NCBI Taxonomy" id="44689"/>
    <lineage>
        <taxon>Eukaryota</taxon>
        <taxon>Amoebozoa</taxon>
        <taxon>Evosea</taxon>
        <taxon>Eumycetozoa</taxon>
        <taxon>Dictyostelia</taxon>
        <taxon>Dictyosteliales</taxon>
        <taxon>Dictyosteliaceae</taxon>
        <taxon>Dictyostelium</taxon>
    </lineage>
</organism>
<proteinExistence type="evidence at protein level"/>
<feature type="chain" id="PRO_0000323435" description="Large ribosomal subunit protein eL6">
    <location>
        <begin position="1"/>
        <end position="236"/>
    </location>
</feature>
<keyword id="KW-0903">Direct protein sequencing</keyword>
<keyword id="KW-1185">Reference proteome</keyword>
<keyword id="KW-0687">Ribonucleoprotein</keyword>
<keyword id="KW-0689">Ribosomal protein</keyword>
<accession>Q54D63</accession>